<feature type="chain" id="PRO_0000086330" description="Misshapen-like kinase 1">
    <location>
        <begin position="1"/>
        <end position="1308"/>
    </location>
</feature>
<feature type="domain" description="Protein kinase" evidence="4">
    <location>
        <begin position="25"/>
        <end position="289"/>
    </location>
</feature>
<feature type="domain" description="CNH" evidence="5">
    <location>
        <begin position="995"/>
        <end position="1282"/>
    </location>
</feature>
<feature type="region of interest" description="Disordered" evidence="7">
    <location>
        <begin position="299"/>
        <end position="347"/>
    </location>
</feature>
<feature type="region of interest" description="Disordered" evidence="7">
    <location>
        <begin position="363"/>
        <end position="383"/>
    </location>
</feature>
<feature type="region of interest" description="Disordered" evidence="7">
    <location>
        <begin position="395"/>
        <end position="862"/>
    </location>
</feature>
<feature type="region of interest" description="Mediates interaction with RAP2A" evidence="1">
    <location>
        <begin position="842"/>
        <end position="1308"/>
    </location>
</feature>
<feature type="region of interest" description="Disordered" evidence="7">
    <location>
        <begin position="881"/>
        <end position="918"/>
    </location>
</feature>
<feature type="compositionally biased region" description="Acidic residues" evidence="7">
    <location>
        <begin position="317"/>
        <end position="333"/>
    </location>
</feature>
<feature type="compositionally biased region" description="Low complexity" evidence="7">
    <location>
        <begin position="371"/>
        <end position="380"/>
    </location>
</feature>
<feature type="compositionally biased region" description="Basic and acidic residues" evidence="7">
    <location>
        <begin position="396"/>
        <end position="466"/>
    </location>
</feature>
<feature type="compositionally biased region" description="Low complexity" evidence="7">
    <location>
        <begin position="479"/>
        <end position="497"/>
    </location>
</feature>
<feature type="compositionally biased region" description="Basic and acidic residues" evidence="7">
    <location>
        <begin position="520"/>
        <end position="530"/>
    </location>
</feature>
<feature type="compositionally biased region" description="Polar residues" evidence="7">
    <location>
        <begin position="600"/>
        <end position="610"/>
    </location>
</feature>
<feature type="compositionally biased region" description="Low complexity" evidence="7">
    <location>
        <begin position="623"/>
        <end position="633"/>
    </location>
</feature>
<feature type="compositionally biased region" description="Polar residues" evidence="7">
    <location>
        <begin position="673"/>
        <end position="685"/>
    </location>
</feature>
<feature type="compositionally biased region" description="Basic and acidic residues" evidence="7">
    <location>
        <begin position="702"/>
        <end position="714"/>
    </location>
</feature>
<feature type="compositionally biased region" description="Basic and acidic residues" evidence="7">
    <location>
        <begin position="773"/>
        <end position="797"/>
    </location>
</feature>
<feature type="compositionally biased region" description="Acidic residues" evidence="7">
    <location>
        <begin position="804"/>
        <end position="820"/>
    </location>
</feature>
<feature type="compositionally biased region" description="Polar residues" evidence="7">
    <location>
        <begin position="891"/>
        <end position="905"/>
    </location>
</feature>
<feature type="active site" description="Proton acceptor" evidence="4 6">
    <location>
        <position position="153"/>
    </location>
</feature>
<feature type="binding site" evidence="4">
    <location>
        <begin position="31"/>
        <end position="39"/>
    </location>
    <ligand>
        <name>ATP</name>
        <dbReference type="ChEBI" id="CHEBI:30616"/>
    </ligand>
</feature>
<feature type="binding site" evidence="4">
    <location>
        <position position="54"/>
    </location>
    <ligand>
        <name>ATP</name>
        <dbReference type="ChEBI" id="CHEBI:30616"/>
    </ligand>
</feature>
<feature type="modified residue" description="Phosphoserine" evidence="16">
    <location>
        <position position="324"/>
    </location>
</feature>
<feature type="modified residue" description="Phosphoserine" evidence="16">
    <location>
        <position position="326"/>
    </location>
</feature>
<feature type="modified residue" description="Omega-N-methylarginine" evidence="17">
    <location>
        <position position="503"/>
    </location>
</feature>
<feature type="modified residue" description="Omega-N-methylarginine" evidence="17">
    <location>
        <position position="511"/>
    </location>
</feature>
<feature type="modified residue" description="Phosphoserine" evidence="3">
    <location>
        <position position="644"/>
    </location>
</feature>
<feature type="modified residue" description="Phosphoserine" evidence="3">
    <location>
        <position position="720"/>
    </location>
</feature>
<feature type="modified residue" description="Phosphoserine" evidence="15 16">
    <location>
        <position position="729"/>
    </location>
</feature>
<feature type="modified residue" description="Phosphoserine" evidence="3">
    <location>
        <position position="745"/>
    </location>
</feature>
<feature type="modified residue" description="Phosphoserine" evidence="16">
    <location>
        <position position="746"/>
    </location>
</feature>
<feature type="modified residue" description="Phosphoserine" evidence="16">
    <location>
        <position position="750"/>
    </location>
</feature>
<feature type="modified residue" description="Phosphothreonine" evidence="16">
    <location>
        <position position="867"/>
    </location>
</feature>
<feature type="splice variant" id="VSP_007061" description="In isoform 3." evidence="11">
    <original>A</original>
    <variation>ARPRSNSAWQIYLQRRAERGTPKPPGPPAQPPGPPNAS</variation>
    <location>
        <position position="698"/>
    </location>
</feature>
<feature type="splice variant" id="VSP_007062" description="In isoform 1." evidence="10">
    <location>
        <begin position="769"/>
        <end position="776"/>
    </location>
</feature>
<feature type="sequence conflict" description="In Ref. 4; AAH11346." evidence="12" ref="4">
    <original>I</original>
    <variation>V</variation>
    <location>
        <position position="221"/>
    </location>
</feature>
<feature type="sequence conflict" description="In Ref. 4; AAH11346." evidence="12" ref="4">
    <original>F</original>
    <variation>L</variation>
    <location>
        <position position="243"/>
    </location>
</feature>
<feature type="sequence conflict" description="In Ref. 4; AAH11346." evidence="12" ref="4">
    <original>E</original>
    <variation>R</variation>
    <location>
        <position position="317"/>
    </location>
</feature>
<feature type="sequence conflict" description="In Ref. 1; BAA90752/BAA94837." evidence="12" ref="1">
    <original>AKPSS</original>
    <variation>RSQAG</variation>
    <location>
        <begin position="542"/>
        <end position="546"/>
    </location>
</feature>
<feature type="sequence conflict" description="In Ref. 4; AAH11346." evidence="12" ref="4">
    <location>
        <position position="832"/>
    </location>
</feature>
<feature type="sequence conflict" description="In Ref. 1; BAA94837/BAA90752." evidence="12" ref="1">
    <original>S</original>
    <variation>T</variation>
    <location>
        <position position="840"/>
    </location>
</feature>
<feature type="modified residue" description="Phosphoserine" evidence="16">
    <location sequence="Q9JM52-3">
        <position position="702"/>
    </location>
</feature>
<organism evidence="13">
    <name type="scientific">Mus musculus</name>
    <name type="common">Mouse</name>
    <dbReference type="NCBI Taxonomy" id="10090"/>
    <lineage>
        <taxon>Eukaryota</taxon>
        <taxon>Metazoa</taxon>
        <taxon>Chordata</taxon>
        <taxon>Craniata</taxon>
        <taxon>Vertebrata</taxon>
        <taxon>Euteleostomi</taxon>
        <taxon>Mammalia</taxon>
        <taxon>Eutheria</taxon>
        <taxon>Euarchontoglires</taxon>
        <taxon>Glires</taxon>
        <taxon>Rodentia</taxon>
        <taxon>Myomorpha</taxon>
        <taxon>Muroidea</taxon>
        <taxon>Muridae</taxon>
        <taxon>Murinae</taxon>
        <taxon>Mus</taxon>
        <taxon>Mus</taxon>
    </lineage>
</organism>
<proteinExistence type="evidence at protein level"/>
<comment type="function">
    <text evidence="2 3 8 9">Serine/threonine kinase which acts as a negative regulator of Ras-related Rap2-mediated signal transduction to control neuronal structure and AMPA receptor trafficking (PubMed:10708748). Required for normal synaptic density, dendrite complexity, as well as surface AMPA receptor expression in hippocampal neurons (By similarity). Can activate the JNK and MAPK14/p38 pathways and mediates stimulation of the stress-activated protein kinase MAPK14/p38 MAPK downstream of the Raf/ERK pathway. Phosphorylates TANC1 upon stimulation by RAP2A, MBP and SMAD1 (By similarity). Has an essential function in negative selection of thymocytes, perhaps by coupling NCK1 to activation of JNK1 (PubMed:15608642). Activator of the Hippo signaling pathway which plays a pivotal role in organ size control and tumor suppression by restricting proliferation and promoting apoptosis. MAP4Ks act in parallel to and are partially redundant with STK3/MST2 and STK4/MST2 in the phosphorylation and activation of LATS1/2, and establish MAP4Ks as components of the expanded Hippo pathway (By similarity).</text>
</comment>
<comment type="catalytic activity">
    <reaction evidence="8">
        <text>L-seryl-[protein] + ATP = O-phospho-L-seryl-[protein] + ADP + H(+)</text>
        <dbReference type="Rhea" id="RHEA:17989"/>
        <dbReference type="Rhea" id="RHEA-COMP:9863"/>
        <dbReference type="Rhea" id="RHEA-COMP:11604"/>
        <dbReference type="ChEBI" id="CHEBI:15378"/>
        <dbReference type="ChEBI" id="CHEBI:29999"/>
        <dbReference type="ChEBI" id="CHEBI:30616"/>
        <dbReference type="ChEBI" id="CHEBI:83421"/>
        <dbReference type="ChEBI" id="CHEBI:456216"/>
        <dbReference type="EC" id="2.7.11.1"/>
    </reaction>
</comment>
<comment type="catalytic activity">
    <reaction evidence="8">
        <text>L-threonyl-[protein] + ATP = O-phospho-L-threonyl-[protein] + ADP + H(+)</text>
        <dbReference type="Rhea" id="RHEA:46608"/>
        <dbReference type="Rhea" id="RHEA-COMP:11060"/>
        <dbReference type="Rhea" id="RHEA-COMP:11605"/>
        <dbReference type="ChEBI" id="CHEBI:15378"/>
        <dbReference type="ChEBI" id="CHEBI:30013"/>
        <dbReference type="ChEBI" id="CHEBI:30616"/>
        <dbReference type="ChEBI" id="CHEBI:61977"/>
        <dbReference type="ChEBI" id="CHEBI:456216"/>
        <dbReference type="EC" id="2.7.11.1"/>
    </reaction>
</comment>
<comment type="cofactor">
    <cofactor evidence="8">
        <name>Mg(2+)</name>
        <dbReference type="ChEBI" id="CHEBI:18420"/>
    </cofactor>
</comment>
<comment type="subunit">
    <text evidence="1 9">Interacts with RAP2A and TANC1 (By similarity). Interacts with NCK1.</text>
</comment>
<comment type="subcellular location">
    <subcellularLocation>
        <location evidence="1">Cytoplasm</location>
    </subcellularLocation>
    <subcellularLocation>
        <location evidence="1">Postsynaptic density</location>
    </subcellularLocation>
    <subcellularLocation>
        <location evidence="1">Cell projection</location>
        <location evidence="1">Axon</location>
    </subcellularLocation>
    <subcellularLocation>
        <location evidence="1">Cell projection</location>
        <location evidence="1">Dendrite</location>
    </subcellularLocation>
</comment>
<comment type="alternative products">
    <event type="alternative splicing"/>
    <isoform>
        <id>Q9JM52-1</id>
        <name evidence="8">2</name>
        <name>MiNK-2</name>
        <sequence type="displayed"/>
    </isoform>
    <isoform>
        <id>Q9JM52-2</id>
        <name evidence="8">1</name>
        <name>MiNK-1</name>
        <sequence type="described" ref="VSP_007062"/>
    </isoform>
    <isoform>
        <id>Q9JM52-3</id>
        <name evidence="8">3</name>
        <sequence type="described" ref="VSP_007061"/>
    </isoform>
</comment>
<comment type="tissue specificity">
    <text evidence="8">Appears to be ubiquitous, expressed in all tissue types examined. Highly expressed in the brain, moderately expressed in kidney and spleen, low levels present in heart and skeletal muscle. Isoform 2 is more abundant in the brain than isoform 1.</text>
</comment>
<comment type="developmental stage">
    <text evidence="8">Up-regulated during postnatal brain development.</text>
</comment>
<comment type="PTM">
    <text evidence="1">Autophosphorylated.</text>
</comment>
<comment type="similarity">
    <text evidence="12">Belongs to the protein kinase superfamily. STE Ser/Thr protein kinase family. STE20 subfamily.</text>
</comment>
<protein>
    <recommendedName>
        <fullName>Misshapen-like kinase 1</fullName>
        <ecNumber>2.7.11.1</ecNumber>
    </recommendedName>
    <alternativeName>
        <fullName>GCK family kinase MiNK</fullName>
    </alternativeName>
    <alternativeName>
        <fullName>MAPK/ERK kinase kinase kinase 6</fullName>
        <shortName>MEK kinase kinase 6</shortName>
        <shortName>MEKKK 6</shortName>
    </alternativeName>
    <alternativeName>
        <fullName>Misshapen/NIK-related kinase</fullName>
    </alternativeName>
    <alternativeName>
        <fullName>Mitogen-activated protein kinase kinase kinase kinase 6</fullName>
    </alternativeName>
</protein>
<dbReference type="EC" id="2.7.11.1"/>
<dbReference type="EMBL" id="AB041925">
    <property type="protein sequence ID" value="BAA94837.1"/>
    <property type="molecule type" value="mRNA"/>
</dbReference>
<dbReference type="EMBL" id="AB035697">
    <property type="protein sequence ID" value="BAA90752.1"/>
    <property type="molecule type" value="mRNA"/>
</dbReference>
<dbReference type="EMBL" id="AL592547">
    <property type="status" value="NOT_ANNOTATED_CDS"/>
    <property type="molecule type" value="Genomic_DNA"/>
</dbReference>
<dbReference type="EMBL" id="CR933736">
    <property type="status" value="NOT_ANNOTATED_CDS"/>
    <property type="molecule type" value="Genomic_DNA"/>
</dbReference>
<dbReference type="EMBL" id="CH466596">
    <property type="protein sequence ID" value="EDL12579.1"/>
    <property type="molecule type" value="Genomic_DNA"/>
</dbReference>
<dbReference type="EMBL" id="BC011346">
    <property type="protein sequence ID" value="AAH11346.1"/>
    <property type="molecule type" value="mRNA"/>
</dbReference>
<dbReference type="CCDS" id="CCDS24954.1">
    <molecule id="Q9JM52-2"/>
</dbReference>
<dbReference type="CCDS" id="CCDS24955.1">
    <molecule id="Q9JM52-1"/>
</dbReference>
<dbReference type="RefSeq" id="NP_001390485.1">
    <molecule id="Q9JM52-3"/>
    <property type="nucleotide sequence ID" value="NM_001403556.1"/>
</dbReference>
<dbReference type="RefSeq" id="NP_057922.2">
    <molecule id="Q9JM52-2"/>
    <property type="nucleotide sequence ID" value="NM_016713.3"/>
</dbReference>
<dbReference type="RefSeq" id="NP_795712.2">
    <molecule id="Q9JM52-1"/>
    <property type="nucleotide sequence ID" value="NM_176893.3"/>
</dbReference>
<dbReference type="RefSeq" id="XP_006533744.1">
    <property type="nucleotide sequence ID" value="XM_006533681.3"/>
</dbReference>
<dbReference type="SMR" id="Q9JM52"/>
<dbReference type="BioGRID" id="206164">
    <property type="interactions" value="19"/>
</dbReference>
<dbReference type="CORUM" id="Q9JM52"/>
<dbReference type="FunCoup" id="Q9JM52">
    <property type="interactions" value="2611"/>
</dbReference>
<dbReference type="IntAct" id="Q9JM52">
    <property type="interactions" value="6"/>
</dbReference>
<dbReference type="STRING" id="10090.ENSMUSP00000072091"/>
<dbReference type="GlyGen" id="Q9JM52">
    <property type="glycosylation" value="6 sites, 2 N-linked glycans (2 sites), 1 O-linked glycan (2 sites)"/>
</dbReference>
<dbReference type="iPTMnet" id="Q9JM52"/>
<dbReference type="PhosphoSitePlus" id="Q9JM52"/>
<dbReference type="SwissPalm" id="Q9JM52"/>
<dbReference type="jPOST" id="Q9JM52"/>
<dbReference type="PaxDb" id="10090-ENSMUSP00000072649"/>
<dbReference type="PeptideAtlas" id="Q9JM52"/>
<dbReference type="ProteomicsDB" id="295942">
    <molecule id="Q9JM52-1"/>
</dbReference>
<dbReference type="ProteomicsDB" id="295943">
    <molecule id="Q9JM52-2"/>
</dbReference>
<dbReference type="ProteomicsDB" id="295944">
    <molecule id="Q9JM52-3"/>
</dbReference>
<dbReference type="Pumba" id="Q9JM52"/>
<dbReference type="Antibodypedia" id="5678">
    <property type="antibodies" value="234 antibodies from 32 providers"/>
</dbReference>
<dbReference type="DNASU" id="50932"/>
<dbReference type="Ensembl" id="ENSMUST00000102558.11">
    <molecule id="Q9JM52-2"/>
    <property type="protein sequence ID" value="ENSMUSP00000099618.5"/>
    <property type="gene ID" value="ENSMUSG00000020827.19"/>
</dbReference>
<dbReference type="Ensembl" id="ENSMUST00000102559.11">
    <molecule id="Q9JM52-1"/>
    <property type="protein sequence ID" value="ENSMUSP00000099619.5"/>
    <property type="gene ID" value="ENSMUSG00000020827.19"/>
</dbReference>
<dbReference type="GeneID" id="50932"/>
<dbReference type="KEGG" id="mmu:50932"/>
<dbReference type="UCSC" id="uc007jvj.1">
    <molecule id="Q9JM52-1"/>
    <property type="organism name" value="mouse"/>
</dbReference>
<dbReference type="UCSC" id="uc007jvl.1">
    <molecule id="Q9JM52-2"/>
    <property type="organism name" value="mouse"/>
</dbReference>
<dbReference type="AGR" id="MGI:1355329"/>
<dbReference type="CTD" id="50488"/>
<dbReference type="MGI" id="MGI:1355329">
    <property type="gene designation" value="Mink1"/>
</dbReference>
<dbReference type="VEuPathDB" id="HostDB:ENSMUSG00000020827"/>
<dbReference type="eggNOG" id="KOG0587">
    <property type="taxonomic scope" value="Eukaryota"/>
</dbReference>
<dbReference type="GeneTree" id="ENSGT00950000183196"/>
<dbReference type="HOGENOM" id="CLU_001831_2_0_1"/>
<dbReference type="InParanoid" id="Q9JM52"/>
<dbReference type="OrthoDB" id="8957712at2759"/>
<dbReference type="Reactome" id="R-MMU-2559580">
    <property type="pathway name" value="Oxidative Stress Induced Senescence"/>
</dbReference>
<dbReference type="BioGRID-ORCS" id="50932">
    <property type="hits" value="3 hits in 83 CRISPR screens"/>
</dbReference>
<dbReference type="CD-CODE" id="CE726F99">
    <property type="entry name" value="Postsynaptic density"/>
</dbReference>
<dbReference type="ChiTaRS" id="Mink1">
    <property type="organism name" value="mouse"/>
</dbReference>
<dbReference type="PRO" id="PR:Q9JM52"/>
<dbReference type="Proteomes" id="UP000000589">
    <property type="component" value="Chromosome 11"/>
</dbReference>
<dbReference type="RNAct" id="Q9JM52">
    <property type="molecule type" value="protein"/>
</dbReference>
<dbReference type="Bgee" id="ENSMUSG00000020827">
    <property type="expression patterns" value="Expressed in visual cortex and 243 other cell types or tissues"/>
</dbReference>
<dbReference type="ExpressionAtlas" id="Q9JM52">
    <property type="expression patterns" value="baseline and differential"/>
</dbReference>
<dbReference type="GO" id="GO:0030424">
    <property type="term" value="C:axon"/>
    <property type="evidence" value="ECO:0007669"/>
    <property type="project" value="UniProtKB-SubCell"/>
</dbReference>
<dbReference type="GO" id="GO:0005737">
    <property type="term" value="C:cytoplasm"/>
    <property type="evidence" value="ECO:0000250"/>
    <property type="project" value="UniProtKB"/>
</dbReference>
<dbReference type="GO" id="GO:0030425">
    <property type="term" value="C:dendrite"/>
    <property type="evidence" value="ECO:0007669"/>
    <property type="project" value="UniProtKB-SubCell"/>
</dbReference>
<dbReference type="GO" id="GO:0014069">
    <property type="term" value="C:postsynaptic density"/>
    <property type="evidence" value="ECO:0007669"/>
    <property type="project" value="UniProtKB-SubCell"/>
</dbReference>
<dbReference type="GO" id="GO:0005524">
    <property type="term" value="F:ATP binding"/>
    <property type="evidence" value="ECO:0000314"/>
    <property type="project" value="UniProtKB"/>
</dbReference>
<dbReference type="GO" id="GO:0106310">
    <property type="term" value="F:protein serine kinase activity"/>
    <property type="evidence" value="ECO:0007669"/>
    <property type="project" value="RHEA"/>
</dbReference>
<dbReference type="GO" id="GO:0004674">
    <property type="term" value="F:protein serine/threonine kinase activity"/>
    <property type="evidence" value="ECO:0000314"/>
    <property type="project" value="UniProtKB"/>
</dbReference>
<dbReference type="GO" id="GO:0007420">
    <property type="term" value="P:brain development"/>
    <property type="evidence" value="ECO:0000270"/>
    <property type="project" value="UniProtKB"/>
</dbReference>
<dbReference type="GO" id="GO:0007268">
    <property type="term" value="P:chemical synaptic transmission"/>
    <property type="evidence" value="ECO:0000250"/>
    <property type="project" value="UniProtKB"/>
</dbReference>
<dbReference type="GO" id="GO:0048813">
    <property type="term" value="P:dendrite morphogenesis"/>
    <property type="evidence" value="ECO:0000250"/>
    <property type="project" value="UniProtKB"/>
</dbReference>
<dbReference type="GO" id="GO:0045060">
    <property type="term" value="P:negative thymic T cell selection"/>
    <property type="evidence" value="ECO:0000315"/>
    <property type="project" value="MGI"/>
</dbReference>
<dbReference type="GO" id="GO:0046330">
    <property type="term" value="P:positive regulation of JNK cascade"/>
    <property type="evidence" value="ECO:0000314"/>
    <property type="project" value="UniProtKB"/>
</dbReference>
<dbReference type="GO" id="GO:1900745">
    <property type="term" value="P:positive regulation of p38MAPK cascade"/>
    <property type="evidence" value="ECO:0000314"/>
    <property type="project" value="UniProtKB"/>
</dbReference>
<dbReference type="GO" id="GO:0046777">
    <property type="term" value="P:protein autophosphorylation"/>
    <property type="evidence" value="ECO:0000250"/>
    <property type="project" value="UniProtKB"/>
</dbReference>
<dbReference type="GO" id="GO:0006468">
    <property type="term" value="P:protein phosphorylation"/>
    <property type="evidence" value="ECO:0000314"/>
    <property type="project" value="UniProtKB"/>
</dbReference>
<dbReference type="GO" id="GO:2000311">
    <property type="term" value="P:regulation of AMPA receptor activity"/>
    <property type="evidence" value="ECO:0000250"/>
    <property type="project" value="UniProtKB"/>
</dbReference>
<dbReference type="CDD" id="cd06636">
    <property type="entry name" value="STKc_MAP4K4_6_N"/>
    <property type="match status" value="1"/>
</dbReference>
<dbReference type="FunFam" id="1.10.510.10:FF:000003">
    <property type="entry name" value="TRAF2 and NCK-interacting protein kinase isoform 4"/>
    <property type="match status" value="1"/>
</dbReference>
<dbReference type="FunFam" id="3.30.200.20:FF:000006">
    <property type="entry name" value="TRAF2 and NCK-interacting protein kinase isoform 4"/>
    <property type="match status" value="1"/>
</dbReference>
<dbReference type="Gene3D" id="3.30.200.20">
    <property type="entry name" value="Phosphorylase Kinase, domain 1"/>
    <property type="match status" value="1"/>
</dbReference>
<dbReference type="Gene3D" id="1.10.510.10">
    <property type="entry name" value="Transferase(Phosphotransferase) domain 1"/>
    <property type="match status" value="1"/>
</dbReference>
<dbReference type="InterPro" id="IPR001180">
    <property type="entry name" value="CNH_dom"/>
</dbReference>
<dbReference type="InterPro" id="IPR011009">
    <property type="entry name" value="Kinase-like_dom_sf"/>
</dbReference>
<dbReference type="InterPro" id="IPR000719">
    <property type="entry name" value="Prot_kinase_dom"/>
</dbReference>
<dbReference type="InterPro" id="IPR017441">
    <property type="entry name" value="Protein_kinase_ATP_BS"/>
</dbReference>
<dbReference type="InterPro" id="IPR008271">
    <property type="entry name" value="Ser/Thr_kinase_AS"/>
</dbReference>
<dbReference type="InterPro" id="IPR051700">
    <property type="entry name" value="STE20_Ser-Thr_kinase"/>
</dbReference>
<dbReference type="PANTHER" id="PTHR47096">
    <property type="entry name" value="MISSHAPEN LIKE KINASE 1"/>
    <property type="match status" value="1"/>
</dbReference>
<dbReference type="PANTHER" id="PTHR47096:SF1">
    <property type="entry name" value="MISSHAPEN LIKE KINASE 1"/>
    <property type="match status" value="1"/>
</dbReference>
<dbReference type="Pfam" id="PF00780">
    <property type="entry name" value="CNH"/>
    <property type="match status" value="1"/>
</dbReference>
<dbReference type="Pfam" id="PF00069">
    <property type="entry name" value="Pkinase"/>
    <property type="match status" value="1"/>
</dbReference>
<dbReference type="SMART" id="SM00036">
    <property type="entry name" value="CNH"/>
    <property type="match status" value="1"/>
</dbReference>
<dbReference type="SMART" id="SM00220">
    <property type="entry name" value="S_TKc"/>
    <property type="match status" value="1"/>
</dbReference>
<dbReference type="SUPFAM" id="SSF56112">
    <property type="entry name" value="Protein kinase-like (PK-like)"/>
    <property type="match status" value="1"/>
</dbReference>
<dbReference type="PROSITE" id="PS50219">
    <property type="entry name" value="CNH"/>
    <property type="match status" value="1"/>
</dbReference>
<dbReference type="PROSITE" id="PS00107">
    <property type="entry name" value="PROTEIN_KINASE_ATP"/>
    <property type="match status" value="1"/>
</dbReference>
<dbReference type="PROSITE" id="PS50011">
    <property type="entry name" value="PROTEIN_KINASE_DOM"/>
    <property type="match status" value="1"/>
</dbReference>
<dbReference type="PROSITE" id="PS00108">
    <property type="entry name" value="PROTEIN_KINASE_ST"/>
    <property type="match status" value="1"/>
</dbReference>
<sequence length="1308" mass="147295">MGDPAPARSLDDIDLSALRDPAGIFELVEVVGNGTYGQVYKGRHVKTGQLAAIKVMDVTEDEEEEIKQEINMLKKYSHHRNIATYYGAFIKKSPPGNDDQLWLVMEFCGAGSVTDLVKNTKGNALKEDCIAYICREILRGLAHLHAHKVIHRDIKGQNVLLTENAEVKLVDFGVSAQLDRTVGRRNTFIGTPYWMAPEVIACDENPDATYDYRSDIWSLGITAIEMAEGAPPLCDMHPMRALFLIPRNPPPRLKSKKWSKKFTDFIDTCLIKTYLSRPPTEQLLKFPFIRDQPTERQVRIQLKDHIDRSRKKRGEKEETEYEYSGSEEEDDSHGEEGEPSSIMNVPGESTLRREFLRLQQENKSNSEALKQQQQLQQQQQRDPEAHIKHLLHQRQRRIEEQKEERRRVEEQQRREREQRKLQEKEQQRRLEDMQALRREEERRQAEREQEYKRKQLEEQRQSERLQRQLQQEHAYLKSLQQQQQQQQLQKQQQQQQQILPGDRKPLYHYGRGINPADKPAWAREVEERARMNKQQNSPLAKAKPSSAGPEPPISQASPSPPGPLSQTPPMQRPVEPQEGPHKSLVAHRVPLKPYAAPVPRSQSLQDQPTRNLAAFPASHDPDPAAVPTPTATPSARGAVIRQNSDPTSEGPGPSPNPPSWVRPDNEAPPKVPQRTSSIATALNTSGAGGSRPAQAVRASNPDLRRSDPGWERSDSVLPASHGHLPQAGSLERNRNRVGASTKLDSSPVLSPGNKAKPEDHRSRPGRPASYKRAIGEDFVLLKERTLDEAPKPPKKAMDYSSSSEEVESSEEEEEEGDGEPSEGSRDTPGGRSDGDTDSVSTMVVHDVEEISGTQPSYGGGTMVVQRTPEEERSLLLADSNGYTNLPDVVQPSHSPTENSKGQSPPTKDGGSDYQSRGLVKAPGKSSFTMFVDLGIYQPGGSGDTIPITALVGGEGGRLDQLQFDVRKGSVVNVNPTNTRAHSETPEIRKYKKRFNSEILCAALWGVNLLVGTENGLMLLDRSGQGKVYGLIGRRRFQQMDVLEGLNLLITISGKRNKLRVYYLSWLRNKILHNDPEVEKKQGWTTVGDMEGCGHYRVVKYERIKFLVIALKNSVEVYAWAPKPYHKFMAFKSFADLPHRPLLVDLTVEEGQRLKVIYGSSAGFHAVDVDSGNSYDIYIPVHIQSQITPHAIIFLPNTDGMEMLLCYEDEGVYVNTYGRIIKDVVLQWGEMPTSVAYICSNQIMGWGEKAIEIRSVETGHLDGVFMHKRAQRLKFLCERNDKVFFASVRSGGSSQVYFMTLNRNCIMNW</sequence>
<accession>Q9JM52</accession>
<accession>Q5SXG2</accession>
<accession>Q921M6</accession>
<accession>Q9JM92</accession>
<reference evidence="12" key="1">
    <citation type="journal article" date="2000" name="FEBS Lett.">
        <title>Molecular cloning of MINK, a novel member of mammalian GCK family kinases, which is up-regulated during postnatal mouse cerebral development.</title>
        <authorList>
            <person name="Dan I."/>
            <person name="Watanabe N.M."/>
            <person name="Kobayashi T."/>
            <person name="Yamashita-Suzuki K."/>
            <person name="Fukagaya Y."/>
            <person name="Kajikawa E."/>
            <person name="Kimura W.K."/>
            <person name="Nakashima T.M."/>
            <person name="Matsumoto K."/>
            <person name="Ninomiya-Tsuji J."/>
            <person name="Kusumi A."/>
        </authorList>
    </citation>
    <scope>NUCLEOTIDE SEQUENCE [MRNA] (ISOFORMS 1 AND 2)</scope>
    <scope>FUNCTION</scope>
    <scope>TISSUE SPECIFICITY</scope>
    <scope>DEVELOPMENTAL STAGE</scope>
    <source>
        <strain>ICR</strain>
        <tissue>Brain</tissue>
    </source>
</reference>
<reference key="2">
    <citation type="journal article" date="2009" name="PLoS Biol.">
        <title>Lineage-specific biology revealed by a finished genome assembly of the mouse.</title>
        <authorList>
            <person name="Church D.M."/>
            <person name="Goodstadt L."/>
            <person name="Hillier L.W."/>
            <person name="Zody M.C."/>
            <person name="Goldstein S."/>
            <person name="She X."/>
            <person name="Bult C.J."/>
            <person name="Agarwala R."/>
            <person name="Cherry J.L."/>
            <person name="DiCuccio M."/>
            <person name="Hlavina W."/>
            <person name="Kapustin Y."/>
            <person name="Meric P."/>
            <person name="Maglott D."/>
            <person name="Birtle Z."/>
            <person name="Marques A.C."/>
            <person name="Graves T."/>
            <person name="Zhou S."/>
            <person name="Teague B."/>
            <person name="Potamousis K."/>
            <person name="Churas C."/>
            <person name="Place M."/>
            <person name="Herschleb J."/>
            <person name="Runnheim R."/>
            <person name="Forrest D."/>
            <person name="Amos-Landgraf J."/>
            <person name="Schwartz D.C."/>
            <person name="Cheng Z."/>
            <person name="Lindblad-Toh K."/>
            <person name="Eichler E.E."/>
            <person name="Ponting C.P."/>
        </authorList>
    </citation>
    <scope>NUCLEOTIDE SEQUENCE [LARGE SCALE GENOMIC DNA]</scope>
    <source>
        <strain>C57BL/6J</strain>
    </source>
</reference>
<reference evidence="12" key="3">
    <citation type="submission" date="2005-07" db="EMBL/GenBank/DDBJ databases">
        <authorList>
            <person name="Mural R.J."/>
            <person name="Adams M.D."/>
            <person name="Myers E.W."/>
            <person name="Smith H.O."/>
            <person name="Venter J.C."/>
        </authorList>
    </citation>
    <scope>NUCLEOTIDE SEQUENCE [LARGE SCALE GENOMIC DNA]</scope>
</reference>
<reference key="4">
    <citation type="journal article" date="2004" name="Genome Res.">
        <title>The status, quality, and expansion of the NIH full-length cDNA project: the Mammalian Gene Collection (MGC).</title>
        <authorList>
            <consortium name="The MGC Project Team"/>
        </authorList>
    </citation>
    <scope>NUCLEOTIDE SEQUENCE [LARGE SCALE MRNA] OF 148-1308 (ISOFORM 3)</scope>
    <source>
        <tissue>Mammary gland</tissue>
    </source>
</reference>
<reference evidence="12" key="5">
    <citation type="submission" date="2007-04" db="UniProtKB">
        <authorList>
            <person name="Lubec G."/>
            <person name="Kang S.U."/>
        </authorList>
    </citation>
    <scope>PROTEIN SEQUENCE OF 735-742 AND 908-920</scope>
    <scope>IDENTIFICATION BY MASS SPECTROMETRY</scope>
    <source>
        <strain>C57BL/6J</strain>
        <tissue>Brain</tissue>
    </source>
</reference>
<reference key="6">
    <citation type="journal article" date="2005" name="Nat. Immunol.">
        <title>Signaling by the kinase MINK is essential in the negative selection of autoreactive thymocytes.</title>
        <authorList>
            <person name="McCarty N."/>
            <person name="Paust S."/>
            <person name="Ikizawa K."/>
            <person name="Dan I."/>
            <person name="Li X."/>
            <person name="Cantor H."/>
        </authorList>
    </citation>
    <scope>FUNCTION</scope>
    <scope>INTERACTION WITH NCK1</scope>
</reference>
<reference key="7">
    <citation type="journal article" date="2005" name="Nat. Immunol.">
        <authorList>
            <person name="McCarty N."/>
            <person name="Paust S."/>
            <person name="Ikizawa K."/>
            <person name="Dan I."/>
            <person name="Li X."/>
            <person name="Cantor H."/>
        </authorList>
    </citation>
    <scope>ERRATUM OF PUBMED:15608642</scope>
</reference>
<reference key="8">
    <citation type="journal article" date="2006" name="Mol. Cell. Proteomics">
        <title>Comprehensive identification of phosphorylation sites in postsynaptic density preparations.</title>
        <authorList>
            <person name="Trinidad J.C."/>
            <person name="Specht C.G."/>
            <person name="Thalhammer A."/>
            <person name="Schoepfer R."/>
            <person name="Burlingame A.L."/>
        </authorList>
    </citation>
    <scope>IDENTIFICATION BY MASS SPECTROMETRY [LARGE SCALE ANALYSIS]</scope>
    <source>
        <tissue>Brain</tissue>
    </source>
</reference>
<reference key="9">
    <citation type="journal article" date="2009" name="Immunity">
        <title>The phagosomal proteome in interferon-gamma-activated macrophages.</title>
        <authorList>
            <person name="Trost M."/>
            <person name="English L."/>
            <person name="Lemieux S."/>
            <person name="Courcelles M."/>
            <person name="Desjardins M."/>
            <person name="Thibault P."/>
        </authorList>
    </citation>
    <scope>PHOSPHORYLATION [LARGE SCALE ANALYSIS] AT SER-729</scope>
    <scope>IDENTIFICATION BY MASS SPECTROMETRY [LARGE SCALE ANALYSIS]</scope>
</reference>
<reference key="10">
    <citation type="journal article" date="2010" name="Cell">
        <title>A tissue-specific atlas of mouse protein phosphorylation and expression.</title>
        <authorList>
            <person name="Huttlin E.L."/>
            <person name="Jedrychowski M.P."/>
            <person name="Elias J.E."/>
            <person name="Goswami T."/>
            <person name="Rad R."/>
            <person name="Beausoleil S.A."/>
            <person name="Villen J."/>
            <person name="Haas W."/>
            <person name="Sowa M.E."/>
            <person name="Gygi S.P."/>
        </authorList>
    </citation>
    <scope>PHOSPHORYLATION [LARGE SCALE ANALYSIS] AT SER-324; SER-326; SER-729; SER-746; SER-750 AND THR-867</scope>
    <scope>PHOSPHORYLATION [LARGE SCALE ANALYSIS] AT SER-702 (ISOFORM 3)</scope>
    <scope>IDENTIFICATION BY MASS SPECTROMETRY [LARGE SCALE ANALYSIS]</scope>
    <source>
        <tissue>Brain</tissue>
        <tissue>Heart</tissue>
        <tissue>Kidney</tissue>
        <tissue>Liver</tissue>
        <tissue>Lung</tissue>
        <tissue>Pancreas</tissue>
        <tissue>Spleen</tissue>
        <tissue>Testis</tissue>
    </source>
</reference>
<reference key="11">
    <citation type="journal article" date="2014" name="Mol. Cell. Proteomics">
        <title>Immunoaffinity enrichment and mass spectrometry analysis of protein methylation.</title>
        <authorList>
            <person name="Guo A."/>
            <person name="Gu H."/>
            <person name="Zhou J."/>
            <person name="Mulhern D."/>
            <person name="Wang Y."/>
            <person name="Lee K.A."/>
            <person name="Yang V."/>
            <person name="Aguiar M."/>
            <person name="Kornhauser J."/>
            <person name="Jia X."/>
            <person name="Ren J."/>
            <person name="Beausoleil S.A."/>
            <person name="Silva J.C."/>
            <person name="Vemulapalli V."/>
            <person name="Bedford M.T."/>
            <person name="Comb M.J."/>
        </authorList>
    </citation>
    <scope>METHYLATION [LARGE SCALE ANALYSIS] AT ARG-503 AND ARG-511</scope>
    <scope>IDENTIFICATION BY MASS SPECTROMETRY [LARGE SCALE ANALYSIS]</scope>
    <source>
        <tissue>Brain</tissue>
    </source>
</reference>
<evidence type="ECO:0000250" key="1"/>
<evidence type="ECO:0000250" key="2">
    <source>
        <dbReference type="UniProtKB" id="F1LP90"/>
    </source>
</evidence>
<evidence type="ECO:0000250" key="3">
    <source>
        <dbReference type="UniProtKB" id="Q8N4C8"/>
    </source>
</evidence>
<evidence type="ECO:0000255" key="4">
    <source>
        <dbReference type="PROSITE-ProRule" id="PRU00159"/>
    </source>
</evidence>
<evidence type="ECO:0000255" key="5">
    <source>
        <dbReference type="PROSITE-ProRule" id="PRU00795"/>
    </source>
</evidence>
<evidence type="ECO:0000255" key="6">
    <source>
        <dbReference type="PROSITE-ProRule" id="PRU10027"/>
    </source>
</evidence>
<evidence type="ECO:0000256" key="7">
    <source>
        <dbReference type="SAM" id="MobiDB-lite"/>
    </source>
</evidence>
<evidence type="ECO:0000269" key="8">
    <source>
    </source>
</evidence>
<evidence type="ECO:0000269" key="9">
    <source>
    </source>
</evidence>
<evidence type="ECO:0000303" key="10">
    <source>
    </source>
</evidence>
<evidence type="ECO:0000303" key="11">
    <source>
    </source>
</evidence>
<evidence type="ECO:0000305" key="12"/>
<evidence type="ECO:0000312" key="13">
    <source>
        <dbReference type="EMBL" id="BAA94837.1"/>
    </source>
</evidence>
<evidence type="ECO:0000312" key="14">
    <source>
        <dbReference type="MGI" id="MGI:1355329"/>
    </source>
</evidence>
<evidence type="ECO:0007744" key="15">
    <source>
    </source>
</evidence>
<evidence type="ECO:0007744" key="16">
    <source>
    </source>
</evidence>
<evidence type="ECO:0007744" key="17">
    <source>
    </source>
</evidence>
<keyword id="KW-0025">Alternative splicing</keyword>
<keyword id="KW-0067">ATP-binding</keyword>
<keyword id="KW-0966">Cell projection</keyword>
<keyword id="KW-0963">Cytoplasm</keyword>
<keyword id="KW-0903">Direct protein sequencing</keyword>
<keyword id="KW-0418">Kinase</keyword>
<keyword id="KW-0488">Methylation</keyword>
<keyword id="KW-0547">Nucleotide-binding</keyword>
<keyword id="KW-0597">Phosphoprotein</keyword>
<keyword id="KW-1185">Reference proteome</keyword>
<keyword id="KW-0723">Serine/threonine-protein kinase</keyword>
<keyword id="KW-0770">Synapse</keyword>
<keyword id="KW-0808">Transferase</keyword>
<name>MINK1_MOUSE</name>
<gene>
    <name evidence="3" type="primary">Mink1</name>
    <name evidence="14" type="synonym">Map4k6</name>
    <name evidence="13" type="synonym">Mink</name>
</gene>